<proteinExistence type="inferred from homology"/>
<sequence length="253" mass="28539">MRVHAIEAFDDNYIWAIETNDKDKVIIVDPGEAQPVQQWLEQNSKSIETILVTHHHYDHTGGIAELIEQSPCPVIGPENPEIKTLTKTVTEGDELTVGGIQWQVLTTPGHTLDHISFYTPGFLFCGDTLFSGGCGRMFEGTPEQFTQSLLKLRKLPGETRVFCAHEYTQANVNFALKVEPENAVLQSYAEKVRMLREQEQITLPSTLQLELAINPFLRFDQKSVIAAANKHAESVKNSPEDVFYTIRQWKDNA</sequence>
<gene>
    <name evidence="1" type="primary">gloB</name>
    <name type="ordered locus">IL1697</name>
</gene>
<organism>
    <name type="scientific">Idiomarina loihiensis (strain ATCC BAA-735 / DSM 15497 / L2-TR)</name>
    <dbReference type="NCBI Taxonomy" id="283942"/>
    <lineage>
        <taxon>Bacteria</taxon>
        <taxon>Pseudomonadati</taxon>
        <taxon>Pseudomonadota</taxon>
        <taxon>Gammaproteobacteria</taxon>
        <taxon>Alteromonadales</taxon>
        <taxon>Idiomarinaceae</taxon>
        <taxon>Idiomarina</taxon>
    </lineage>
</organism>
<keyword id="KW-0378">Hydrolase</keyword>
<keyword id="KW-0479">Metal-binding</keyword>
<keyword id="KW-1185">Reference proteome</keyword>
<keyword id="KW-0862">Zinc</keyword>
<comment type="function">
    <text evidence="1">Thiolesterase that catalyzes the hydrolysis of S-D-lactoyl-glutathione to form glutathione and D-lactic acid.</text>
</comment>
<comment type="catalytic activity">
    <reaction evidence="1">
        <text>an S-(2-hydroxyacyl)glutathione + H2O = a 2-hydroxy carboxylate + glutathione + H(+)</text>
        <dbReference type="Rhea" id="RHEA:21864"/>
        <dbReference type="ChEBI" id="CHEBI:15377"/>
        <dbReference type="ChEBI" id="CHEBI:15378"/>
        <dbReference type="ChEBI" id="CHEBI:57925"/>
        <dbReference type="ChEBI" id="CHEBI:58896"/>
        <dbReference type="ChEBI" id="CHEBI:71261"/>
        <dbReference type="EC" id="3.1.2.6"/>
    </reaction>
</comment>
<comment type="cofactor">
    <cofactor evidence="1">
        <name>Zn(2+)</name>
        <dbReference type="ChEBI" id="CHEBI:29105"/>
    </cofactor>
    <text evidence="1">Binds 2 Zn(2+) ions per subunit.</text>
</comment>
<comment type="pathway">
    <text evidence="1">Secondary metabolite metabolism; methylglyoxal degradation; (R)-lactate from methylglyoxal: step 2/2.</text>
</comment>
<comment type="subunit">
    <text evidence="1">Monomer.</text>
</comment>
<comment type="similarity">
    <text evidence="1">Belongs to the metallo-beta-lactamase superfamily. Glyoxalase II family.</text>
</comment>
<accession>Q5QZL0</accession>
<evidence type="ECO:0000255" key="1">
    <source>
        <dbReference type="HAMAP-Rule" id="MF_01374"/>
    </source>
</evidence>
<protein>
    <recommendedName>
        <fullName evidence="1">Hydroxyacylglutathione hydrolase</fullName>
        <ecNumber evidence="1">3.1.2.6</ecNumber>
    </recommendedName>
    <alternativeName>
        <fullName evidence="1">Glyoxalase II</fullName>
        <shortName evidence="1">Glx II</shortName>
    </alternativeName>
</protein>
<feature type="chain" id="PRO_1000068219" description="Hydroxyacylglutathione hydrolase">
    <location>
        <begin position="1"/>
        <end position="253"/>
    </location>
</feature>
<feature type="binding site" evidence="1">
    <location>
        <position position="54"/>
    </location>
    <ligand>
        <name>Zn(2+)</name>
        <dbReference type="ChEBI" id="CHEBI:29105"/>
        <label>1</label>
    </ligand>
</feature>
<feature type="binding site" evidence="1">
    <location>
        <position position="56"/>
    </location>
    <ligand>
        <name>Zn(2+)</name>
        <dbReference type="ChEBI" id="CHEBI:29105"/>
        <label>1</label>
    </ligand>
</feature>
<feature type="binding site" evidence="1">
    <location>
        <position position="58"/>
    </location>
    <ligand>
        <name>Zn(2+)</name>
        <dbReference type="ChEBI" id="CHEBI:29105"/>
        <label>2</label>
    </ligand>
</feature>
<feature type="binding site" evidence="1">
    <location>
        <position position="59"/>
    </location>
    <ligand>
        <name>Zn(2+)</name>
        <dbReference type="ChEBI" id="CHEBI:29105"/>
        <label>2</label>
    </ligand>
</feature>
<feature type="binding site" evidence="1">
    <location>
        <position position="110"/>
    </location>
    <ligand>
        <name>Zn(2+)</name>
        <dbReference type="ChEBI" id="CHEBI:29105"/>
        <label>1</label>
    </ligand>
</feature>
<feature type="binding site" evidence="1">
    <location>
        <position position="127"/>
    </location>
    <ligand>
        <name>Zn(2+)</name>
        <dbReference type="ChEBI" id="CHEBI:29105"/>
        <label>1</label>
    </ligand>
</feature>
<feature type="binding site" evidence="1">
    <location>
        <position position="127"/>
    </location>
    <ligand>
        <name>Zn(2+)</name>
        <dbReference type="ChEBI" id="CHEBI:29105"/>
        <label>2</label>
    </ligand>
</feature>
<feature type="binding site" evidence="1">
    <location>
        <position position="165"/>
    </location>
    <ligand>
        <name>Zn(2+)</name>
        <dbReference type="ChEBI" id="CHEBI:29105"/>
        <label>2</label>
    </ligand>
</feature>
<dbReference type="EC" id="3.1.2.6" evidence="1"/>
<dbReference type="EMBL" id="AE017340">
    <property type="protein sequence ID" value="AAV82530.1"/>
    <property type="molecule type" value="Genomic_DNA"/>
</dbReference>
<dbReference type="RefSeq" id="WP_011234933.1">
    <property type="nucleotide sequence ID" value="NC_006512.1"/>
</dbReference>
<dbReference type="SMR" id="Q5QZL0"/>
<dbReference type="STRING" id="283942.IL1697"/>
<dbReference type="GeneID" id="41336872"/>
<dbReference type="KEGG" id="ilo:IL1697"/>
<dbReference type="eggNOG" id="COG0491">
    <property type="taxonomic scope" value="Bacteria"/>
</dbReference>
<dbReference type="HOGENOM" id="CLU_030571_4_1_6"/>
<dbReference type="OrthoDB" id="9802248at2"/>
<dbReference type="UniPathway" id="UPA00619">
    <property type="reaction ID" value="UER00676"/>
</dbReference>
<dbReference type="Proteomes" id="UP000001171">
    <property type="component" value="Chromosome"/>
</dbReference>
<dbReference type="GO" id="GO:0004416">
    <property type="term" value="F:hydroxyacylglutathione hydrolase activity"/>
    <property type="evidence" value="ECO:0007669"/>
    <property type="project" value="UniProtKB-UniRule"/>
</dbReference>
<dbReference type="GO" id="GO:0046872">
    <property type="term" value="F:metal ion binding"/>
    <property type="evidence" value="ECO:0007669"/>
    <property type="project" value="UniProtKB-KW"/>
</dbReference>
<dbReference type="GO" id="GO:0019243">
    <property type="term" value="P:methylglyoxal catabolic process to D-lactate via S-lactoyl-glutathione"/>
    <property type="evidence" value="ECO:0007669"/>
    <property type="project" value="InterPro"/>
</dbReference>
<dbReference type="CDD" id="cd07723">
    <property type="entry name" value="hydroxyacylglutathione_hydrolase_MBL-fold"/>
    <property type="match status" value="1"/>
</dbReference>
<dbReference type="Gene3D" id="3.60.15.10">
    <property type="entry name" value="Ribonuclease Z/Hydroxyacylglutathione hydrolase-like"/>
    <property type="match status" value="1"/>
</dbReference>
<dbReference type="HAMAP" id="MF_01374">
    <property type="entry name" value="Glyoxalase_2"/>
    <property type="match status" value="1"/>
</dbReference>
<dbReference type="InterPro" id="IPR035680">
    <property type="entry name" value="Clx_II_MBL"/>
</dbReference>
<dbReference type="InterPro" id="IPR050110">
    <property type="entry name" value="Glyoxalase_II_hydrolase"/>
</dbReference>
<dbReference type="InterPro" id="IPR032282">
    <property type="entry name" value="HAGH_C"/>
</dbReference>
<dbReference type="InterPro" id="IPR017782">
    <property type="entry name" value="Hydroxyacylglutathione_Hdrlase"/>
</dbReference>
<dbReference type="InterPro" id="IPR001279">
    <property type="entry name" value="Metallo-B-lactamas"/>
</dbReference>
<dbReference type="InterPro" id="IPR036866">
    <property type="entry name" value="RibonucZ/Hydroxyglut_hydro"/>
</dbReference>
<dbReference type="NCBIfam" id="TIGR03413">
    <property type="entry name" value="GSH_gloB"/>
    <property type="match status" value="1"/>
</dbReference>
<dbReference type="PANTHER" id="PTHR43705">
    <property type="entry name" value="HYDROXYACYLGLUTATHIONE HYDROLASE"/>
    <property type="match status" value="1"/>
</dbReference>
<dbReference type="PANTHER" id="PTHR43705:SF1">
    <property type="entry name" value="HYDROXYACYLGLUTATHIONE HYDROLASE GLOB"/>
    <property type="match status" value="1"/>
</dbReference>
<dbReference type="Pfam" id="PF16123">
    <property type="entry name" value="HAGH_C"/>
    <property type="match status" value="1"/>
</dbReference>
<dbReference type="Pfam" id="PF00753">
    <property type="entry name" value="Lactamase_B"/>
    <property type="match status" value="1"/>
</dbReference>
<dbReference type="PIRSF" id="PIRSF005457">
    <property type="entry name" value="Glx"/>
    <property type="match status" value="1"/>
</dbReference>
<dbReference type="SMART" id="SM00849">
    <property type="entry name" value="Lactamase_B"/>
    <property type="match status" value="1"/>
</dbReference>
<dbReference type="SUPFAM" id="SSF56281">
    <property type="entry name" value="Metallo-hydrolase/oxidoreductase"/>
    <property type="match status" value="1"/>
</dbReference>
<reference key="1">
    <citation type="journal article" date="2004" name="Proc. Natl. Acad. Sci. U.S.A.">
        <title>Genome sequence of the deep-sea gamma-proteobacterium Idiomarina loihiensis reveals amino acid fermentation as a source of carbon and energy.</title>
        <authorList>
            <person name="Hou S."/>
            <person name="Saw J.H."/>
            <person name="Lee K.S."/>
            <person name="Freitas T.A."/>
            <person name="Belisle C."/>
            <person name="Kawarabayasi Y."/>
            <person name="Donachie S.P."/>
            <person name="Pikina A."/>
            <person name="Galperin M.Y."/>
            <person name="Koonin E.V."/>
            <person name="Makarova K.S."/>
            <person name="Omelchenko M.V."/>
            <person name="Sorokin A."/>
            <person name="Wolf Y.I."/>
            <person name="Li Q.X."/>
            <person name="Keum Y.S."/>
            <person name="Campbell S."/>
            <person name="Denery J."/>
            <person name="Aizawa S."/>
            <person name="Shibata S."/>
            <person name="Malahoff A."/>
            <person name="Alam M."/>
        </authorList>
    </citation>
    <scope>NUCLEOTIDE SEQUENCE [LARGE SCALE GENOMIC DNA]</scope>
    <source>
        <strain>ATCC BAA-735 / DSM 15497 / L2-TR</strain>
    </source>
</reference>
<name>GLO2_IDILO</name>